<evidence type="ECO:0000250" key="1"/>
<evidence type="ECO:0000250" key="2">
    <source>
        <dbReference type="UniProtKB" id="P10823"/>
    </source>
</evidence>
<evidence type="ECO:0000250" key="3">
    <source>
        <dbReference type="UniProtKB" id="P18064"/>
    </source>
</evidence>
<evidence type="ECO:0000255" key="4">
    <source>
        <dbReference type="PROSITE-ProRule" id="PRU01230"/>
    </source>
</evidence>
<evidence type="ECO:0000305" key="5"/>
<evidence type="ECO:0000312" key="6">
    <source>
        <dbReference type="EMBL" id="KRH05424.1"/>
    </source>
</evidence>
<evidence type="ECO:0000312" key="7">
    <source>
        <dbReference type="EnsemblPlants" id="KRH05424"/>
    </source>
</evidence>
<proteinExistence type="evidence at transcript level"/>
<sequence>MGLLCSRNRRYNDADAEENAQTAEIERRIELETKAEKHIQKLLLLGAGESGKSTIFKQIKLLFQTGFDEAELKSYLPVIHANVYQTIKLLHDGSKEFAQNDVDSSKYVISNENKEIGEKLLEIGGRLDYPYLSKELAQEIENLWKDPAIQETYARGSELQIPDCTDYFMENLQRLSDANYVPTKEDVLYARVRTTGVVEIQFSPVGENKKSGEVYRLFDVGGQRNERRKWIHLFEGVSAVIFCAAISEYDQTLFEDENRNRMMETKELFEWILKQPCFEKTSFMLFLNKFDIFEKKILKVPLNVCEWFKDYQPVSTGKQEIEHAYEFVKKKFEESYFQSTAPDRVDRVFKIYRTTALDQKVVKKTFKLVDETLRRRNLLEAGLL</sequence>
<dbReference type="EMBL" id="X95582">
    <property type="protein sequence ID" value="CAA64834.1"/>
    <property type="molecule type" value="mRNA"/>
</dbReference>
<dbReference type="EMBL" id="CM000850">
    <property type="protein sequence ID" value="KRH05424.1"/>
    <property type="molecule type" value="Genomic_DNA"/>
</dbReference>
<dbReference type="EMBL" id="CM000850">
    <property type="protein sequence ID" value="KRH05423.1"/>
    <property type="status" value="ALT_INIT"/>
    <property type="molecule type" value="Genomic_DNA"/>
</dbReference>
<dbReference type="EMBL" id="CM000850">
    <property type="protein sequence ID" value="KRH05422.1"/>
    <property type="status" value="ALT_INIT"/>
    <property type="molecule type" value="Genomic_DNA"/>
</dbReference>
<dbReference type="RefSeq" id="NP_001236873.1">
    <property type="nucleotide sequence ID" value="NM_001249944.1"/>
</dbReference>
<dbReference type="RefSeq" id="XP_006600244.1">
    <property type="nucleotide sequence ID" value="XM_006600181.2"/>
</dbReference>
<dbReference type="RefSeq" id="XP_006600245.1">
    <property type="nucleotide sequence ID" value="XM_006600182.2"/>
</dbReference>
<dbReference type="RefSeq" id="XP_006600246.1">
    <property type="nucleotide sequence ID" value="XM_006600183.4"/>
</dbReference>
<dbReference type="SMR" id="P93163"/>
<dbReference type="FunCoup" id="P93163">
    <property type="interactions" value="4093"/>
</dbReference>
<dbReference type="STRING" id="3847.P93163"/>
<dbReference type="PaxDb" id="3847-GLYMA17G34450.1"/>
<dbReference type="EnsemblPlants" id="KRH05424">
    <property type="protein sequence ID" value="KRH05424"/>
    <property type="gene ID" value="GLYMA_17G226700"/>
</dbReference>
<dbReference type="GeneID" id="547977"/>
<dbReference type="Gramene" id="KRH05424">
    <property type="protein sequence ID" value="KRH05424"/>
    <property type="gene ID" value="GLYMA_17G226700"/>
</dbReference>
<dbReference type="KEGG" id="gmx:547977"/>
<dbReference type="eggNOG" id="KOG0082">
    <property type="taxonomic scope" value="Eukaryota"/>
</dbReference>
<dbReference type="HOGENOM" id="CLU_014184_4_0_1"/>
<dbReference type="InParanoid" id="P93163"/>
<dbReference type="OMA" id="QVIWADA"/>
<dbReference type="OrthoDB" id="5817230at2759"/>
<dbReference type="Proteomes" id="UP000008827">
    <property type="component" value="Chromosome 17"/>
</dbReference>
<dbReference type="ExpressionAtlas" id="P93163">
    <property type="expression patterns" value="baseline and differential"/>
</dbReference>
<dbReference type="GO" id="GO:0005737">
    <property type="term" value="C:cytoplasm"/>
    <property type="evidence" value="ECO:0000318"/>
    <property type="project" value="GO_Central"/>
</dbReference>
<dbReference type="GO" id="GO:0005834">
    <property type="term" value="C:heterotrimeric G-protein complex"/>
    <property type="evidence" value="ECO:0000318"/>
    <property type="project" value="GO_Central"/>
</dbReference>
<dbReference type="GO" id="GO:0001664">
    <property type="term" value="F:G protein-coupled receptor binding"/>
    <property type="evidence" value="ECO:0000318"/>
    <property type="project" value="GO_Central"/>
</dbReference>
<dbReference type="GO" id="GO:0031683">
    <property type="term" value="F:G-protein beta/gamma-subunit complex binding"/>
    <property type="evidence" value="ECO:0000318"/>
    <property type="project" value="GO_Central"/>
</dbReference>
<dbReference type="GO" id="GO:0005525">
    <property type="term" value="F:GTP binding"/>
    <property type="evidence" value="ECO:0007669"/>
    <property type="project" value="UniProtKB-UniRule"/>
</dbReference>
<dbReference type="GO" id="GO:0003924">
    <property type="term" value="F:GTPase activity"/>
    <property type="evidence" value="ECO:0000318"/>
    <property type="project" value="GO_Central"/>
</dbReference>
<dbReference type="GO" id="GO:0046872">
    <property type="term" value="F:metal ion binding"/>
    <property type="evidence" value="ECO:0007669"/>
    <property type="project" value="UniProtKB-UniRule"/>
</dbReference>
<dbReference type="GO" id="GO:0007188">
    <property type="term" value="P:adenylate cyclase-modulating G protein-coupled receptor signaling pathway"/>
    <property type="evidence" value="ECO:0000318"/>
    <property type="project" value="GO_Central"/>
</dbReference>
<dbReference type="CDD" id="cd00066">
    <property type="entry name" value="G-alpha"/>
    <property type="match status" value="1"/>
</dbReference>
<dbReference type="FunFam" id="1.10.400.10:FF:000008">
    <property type="entry name" value="Guanine nucleotide-binding protein alpha-1 subunit"/>
    <property type="match status" value="1"/>
</dbReference>
<dbReference type="FunFam" id="3.40.50.300:FF:000733">
    <property type="entry name" value="Guanine nucleotide-binding protein alpha-1 subunit"/>
    <property type="match status" value="1"/>
</dbReference>
<dbReference type="Gene3D" id="1.10.400.10">
    <property type="entry name" value="GI Alpha 1, domain 2-like"/>
    <property type="match status" value="1"/>
</dbReference>
<dbReference type="Gene3D" id="3.40.50.300">
    <property type="entry name" value="P-loop containing nucleotide triphosphate hydrolases"/>
    <property type="match status" value="1"/>
</dbReference>
<dbReference type="InterPro" id="IPR001019">
    <property type="entry name" value="Gprotein_alpha_su"/>
</dbReference>
<dbReference type="InterPro" id="IPR011025">
    <property type="entry name" value="GproteinA_insert"/>
</dbReference>
<dbReference type="InterPro" id="IPR027417">
    <property type="entry name" value="P-loop_NTPase"/>
</dbReference>
<dbReference type="InterPro" id="IPR002976">
    <property type="entry name" value="Plant_Gprotein_alpha"/>
</dbReference>
<dbReference type="PANTHER" id="PTHR10218">
    <property type="entry name" value="GTP-BINDING PROTEIN ALPHA SUBUNIT"/>
    <property type="match status" value="1"/>
</dbReference>
<dbReference type="PANTHER" id="PTHR10218:SF343">
    <property type="entry name" value="GUANINE NUCLEOTIDE-BINDING PROTEIN ALPHA-2 SUBUNIT"/>
    <property type="match status" value="1"/>
</dbReference>
<dbReference type="Pfam" id="PF00503">
    <property type="entry name" value="G-alpha"/>
    <property type="match status" value="1"/>
</dbReference>
<dbReference type="PRINTS" id="PR00318">
    <property type="entry name" value="GPROTEINA"/>
</dbReference>
<dbReference type="PRINTS" id="PR01242">
    <property type="entry name" value="GPROTEINAPLT"/>
</dbReference>
<dbReference type="SMART" id="SM00275">
    <property type="entry name" value="G_alpha"/>
    <property type="match status" value="1"/>
</dbReference>
<dbReference type="SUPFAM" id="SSF52540">
    <property type="entry name" value="P-loop containing nucleoside triphosphate hydrolases"/>
    <property type="match status" value="1"/>
</dbReference>
<dbReference type="SUPFAM" id="SSF47895">
    <property type="entry name" value="Transducin (alpha subunit), insertion domain"/>
    <property type="match status" value="1"/>
</dbReference>
<dbReference type="PROSITE" id="PS51882">
    <property type="entry name" value="G_ALPHA"/>
    <property type="match status" value="1"/>
</dbReference>
<organism>
    <name type="scientific">Glycine max</name>
    <name type="common">Soybean</name>
    <name type="synonym">Glycine hispida</name>
    <dbReference type="NCBI Taxonomy" id="3847"/>
    <lineage>
        <taxon>Eukaryota</taxon>
        <taxon>Viridiplantae</taxon>
        <taxon>Streptophyta</taxon>
        <taxon>Embryophyta</taxon>
        <taxon>Tracheophyta</taxon>
        <taxon>Spermatophyta</taxon>
        <taxon>Magnoliopsida</taxon>
        <taxon>eudicotyledons</taxon>
        <taxon>Gunneridae</taxon>
        <taxon>Pentapetalae</taxon>
        <taxon>rosids</taxon>
        <taxon>fabids</taxon>
        <taxon>Fabales</taxon>
        <taxon>Fabaceae</taxon>
        <taxon>Papilionoideae</taxon>
        <taxon>50 kb inversion clade</taxon>
        <taxon>NPAAA clade</taxon>
        <taxon>indigoferoid/millettioid clade</taxon>
        <taxon>Phaseoleae</taxon>
        <taxon>Glycine</taxon>
        <taxon>Glycine subgen. Soja</taxon>
    </lineage>
</organism>
<keyword id="KW-0342">GTP-binding</keyword>
<keyword id="KW-0378">Hydrolase</keyword>
<keyword id="KW-0449">Lipoprotein</keyword>
<keyword id="KW-0460">Magnesium</keyword>
<keyword id="KW-0479">Metal-binding</keyword>
<keyword id="KW-0519">Myristate</keyword>
<keyword id="KW-0547">Nucleotide-binding</keyword>
<keyword id="KW-0564">Palmitate</keyword>
<keyword id="KW-1185">Reference proteome</keyword>
<keyword id="KW-0807">Transducer</keyword>
<protein>
    <recommendedName>
        <fullName>Guanine nucleotide-binding protein alpha-2 subunit</fullName>
        <shortName>GP-alpha-2</shortName>
    </recommendedName>
</protein>
<accession>P93163</accession>
<accession>I1MX88</accession>
<accession>K7MNE9</accession>
<comment type="function">
    <text>Guanine nucleotide-binding proteins (G proteins) are involved as modulators or transducers in various transmembrane signaling systems.</text>
</comment>
<comment type="cofactor">
    <cofactor evidence="3">
        <name>Mg(2+)</name>
        <dbReference type="ChEBI" id="CHEBI:18420"/>
    </cofactor>
</comment>
<comment type="subunit">
    <text>G proteins are composed of 3 units; alpha, beta and gamma. The alpha chain contains the guanine nucleotide binding site.</text>
</comment>
<comment type="domain">
    <text evidence="1">The helical domain (70-190) is required for self-activation.</text>
</comment>
<comment type="similarity">
    <text evidence="5">Belongs to the G-alpha family.</text>
</comment>
<comment type="sequence caution" evidence="5">
    <conflict type="erroneous initiation">
        <sequence resource="EMBL-CDS" id="KRH05422"/>
    </conflict>
    <text>Extended N-terminus.</text>
</comment>
<comment type="sequence caution" evidence="5">
    <conflict type="erroneous initiation">
        <sequence resource="EMBL-CDS" id="KRH05423"/>
    </conflict>
    <text>Extended N-terminus.</text>
</comment>
<name>GPA2_SOYBN</name>
<feature type="initiator methionine" description="Removed" evidence="1">
    <location>
        <position position="1"/>
    </location>
</feature>
<feature type="chain" id="PRO_0000203627" description="Guanine nucleotide-binding protein alpha-2 subunit">
    <location>
        <begin position="2"/>
        <end position="384"/>
    </location>
</feature>
<feature type="domain" description="G-alpha" evidence="4">
    <location>
        <begin position="38"/>
        <end position="384"/>
    </location>
</feature>
<feature type="region of interest" description="G1 motif" evidence="4">
    <location>
        <begin position="41"/>
        <end position="54"/>
    </location>
</feature>
<feature type="region of interest" description="G2 motif" evidence="4">
    <location>
        <begin position="186"/>
        <end position="194"/>
    </location>
</feature>
<feature type="region of interest" description="G3 motif" evidence="4">
    <location>
        <begin position="215"/>
        <end position="224"/>
    </location>
</feature>
<feature type="region of interest" description="G4 motif" evidence="4">
    <location>
        <begin position="284"/>
        <end position="291"/>
    </location>
</feature>
<feature type="region of interest" description="G5 motif" evidence="4">
    <location>
        <begin position="354"/>
        <end position="359"/>
    </location>
</feature>
<feature type="binding site" evidence="3">
    <location>
        <position position="49"/>
    </location>
    <ligand>
        <name>GTP</name>
        <dbReference type="ChEBI" id="CHEBI:37565"/>
    </ligand>
</feature>
<feature type="binding site" evidence="3">
    <location>
        <position position="50"/>
    </location>
    <ligand>
        <name>GTP</name>
        <dbReference type="ChEBI" id="CHEBI:37565"/>
    </ligand>
</feature>
<feature type="binding site" evidence="3">
    <location>
        <position position="51"/>
    </location>
    <ligand>
        <name>GTP</name>
        <dbReference type="ChEBI" id="CHEBI:37565"/>
    </ligand>
</feature>
<feature type="binding site" evidence="3">
    <location>
        <position position="52"/>
    </location>
    <ligand>
        <name>GTP</name>
        <dbReference type="ChEBI" id="CHEBI:37565"/>
    </ligand>
</feature>
<feature type="binding site" evidence="3">
    <location>
        <position position="53"/>
    </location>
    <ligand>
        <name>GTP</name>
        <dbReference type="ChEBI" id="CHEBI:37565"/>
    </ligand>
</feature>
<feature type="binding site" evidence="3">
    <location>
        <position position="53"/>
    </location>
    <ligand>
        <name>Mg(2+)</name>
        <dbReference type="ChEBI" id="CHEBI:18420"/>
    </ligand>
</feature>
<feature type="binding site" evidence="3">
    <location>
        <position position="54"/>
    </location>
    <ligand>
        <name>GTP</name>
        <dbReference type="ChEBI" id="CHEBI:37565"/>
    </ligand>
</feature>
<feature type="binding site" evidence="3">
    <location>
        <position position="163"/>
    </location>
    <ligand>
        <name>GTP</name>
        <dbReference type="ChEBI" id="CHEBI:37565"/>
    </ligand>
</feature>
<feature type="binding site" evidence="3">
    <location>
        <position position="188"/>
    </location>
    <ligand>
        <name>GTP</name>
        <dbReference type="ChEBI" id="CHEBI:37565"/>
    </ligand>
</feature>
<feature type="binding site" evidence="3">
    <location>
        <position position="189"/>
    </location>
    <ligand>
        <name>GTP</name>
        <dbReference type="ChEBI" id="CHEBI:37565"/>
    </ligand>
</feature>
<feature type="binding site" evidence="3">
    <location>
        <position position="194"/>
    </location>
    <ligand>
        <name>GTP</name>
        <dbReference type="ChEBI" id="CHEBI:37565"/>
    </ligand>
</feature>
<feature type="binding site" evidence="3">
    <location>
        <position position="194"/>
    </location>
    <ligand>
        <name>Mg(2+)</name>
        <dbReference type="ChEBI" id="CHEBI:18420"/>
    </ligand>
</feature>
<feature type="binding site" evidence="3">
    <location>
        <position position="222"/>
    </location>
    <ligand>
        <name>GTP</name>
        <dbReference type="ChEBI" id="CHEBI:37565"/>
    </ligand>
</feature>
<feature type="binding site" evidence="3">
    <location>
        <position position="288"/>
    </location>
    <ligand>
        <name>GTP</name>
        <dbReference type="ChEBI" id="CHEBI:37565"/>
    </ligand>
</feature>
<feature type="binding site" evidence="3">
    <location>
        <position position="289"/>
    </location>
    <ligand>
        <name>GTP</name>
        <dbReference type="ChEBI" id="CHEBI:37565"/>
    </ligand>
</feature>
<feature type="binding site" evidence="3">
    <location>
        <position position="291"/>
    </location>
    <ligand>
        <name>GTP</name>
        <dbReference type="ChEBI" id="CHEBI:37565"/>
    </ligand>
</feature>
<feature type="binding site" evidence="3">
    <location>
        <position position="356"/>
    </location>
    <ligand>
        <name>GTP</name>
        <dbReference type="ChEBI" id="CHEBI:37565"/>
    </ligand>
</feature>
<feature type="lipid moiety-binding region" description="N-myristoyl glycine" evidence="2">
    <location>
        <position position="2"/>
    </location>
</feature>
<feature type="lipid moiety-binding region" description="S-palmitoyl cysteine" evidence="3">
    <location>
        <position position="5"/>
    </location>
</feature>
<feature type="sequence conflict" description="In Ref. 1; CAA64834." evidence="5" ref="1">
    <original>LETK</original>
    <variation>VRNER</variation>
    <location>
        <begin position="31"/>
        <end position="34"/>
    </location>
</feature>
<feature type="sequence conflict" description="In Ref. 1; CAA64834." evidence="5" ref="1">
    <original>G</original>
    <variation>D</variation>
    <location>
        <position position="212"/>
    </location>
</feature>
<gene>
    <name type="primary">GPA2</name>
    <name type="synonym">GA2</name>
    <name evidence="6" type="ORF">GLYMA_17G226700</name>
</gene>
<reference key="1">
    <citation type="journal article" date="1996" name="Plant Mol. Biol.">
        <title>Isolation and analysis of the soybean SGA2 gene (cDNA), encoding a new member of the plant G-protein family of signal transducers.</title>
        <authorList>
            <person name="Gotor C."/>
            <person name="Lam E."/>
            <person name="Cejudo F.J."/>
            <person name="Romero L.C."/>
        </authorList>
    </citation>
    <scope>NUCLEOTIDE SEQUENCE [MRNA]</scope>
    <source>
        <strain>cv. Corsoy</strain>
    </source>
</reference>
<reference evidence="7" key="2">
    <citation type="journal article" date="2010" name="Nature">
        <title>Genome sequence of the palaeopolyploid soybean.</title>
        <authorList>
            <person name="Schmutz J."/>
            <person name="Cannon S.B."/>
            <person name="Schlueter J."/>
            <person name="Ma J."/>
            <person name="Mitros T."/>
            <person name="Nelson W."/>
            <person name="Hyten D.L."/>
            <person name="Song Q."/>
            <person name="Thelen J.J."/>
            <person name="Cheng J."/>
            <person name="Xu D."/>
            <person name="Hellsten U."/>
            <person name="May G.D."/>
            <person name="Yu Y."/>
            <person name="Sakurai T."/>
            <person name="Umezawa T."/>
            <person name="Bhattacharyya M.K."/>
            <person name="Sandhu D."/>
            <person name="Valliyodan B."/>
            <person name="Lindquist E."/>
            <person name="Peto M."/>
            <person name="Grant D."/>
            <person name="Shu S."/>
            <person name="Goodstein D."/>
            <person name="Barry K."/>
            <person name="Futrell-Griggs M."/>
            <person name="Abernathy B."/>
            <person name="Du J."/>
            <person name="Tian Z."/>
            <person name="Zhu L."/>
            <person name="Gill N."/>
            <person name="Joshi T."/>
            <person name="Libault M."/>
            <person name="Sethuraman A."/>
            <person name="Zhang X.-C."/>
            <person name="Shinozaki K."/>
            <person name="Nguyen H.T."/>
            <person name="Wing R.A."/>
            <person name="Cregan P."/>
            <person name="Specht J."/>
            <person name="Grimwood J."/>
            <person name="Rokhsar D."/>
            <person name="Stacey G."/>
            <person name="Shoemaker R.C."/>
            <person name="Jackson S.A."/>
        </authorList>
    </citation>
    <scope>NUCLEOTIDE SEQUENCE [LARGE SCALE GENOMIC DNA]</scope>
    <source>
        <strain evidence="7">cv. Williams 82</strain>
        <tissue evidence="6">Callus</tissue>
    </source>
</reference>